<comment type="catalytic activity">
    <reaction evidence="2">
        <text>5-phospho-beta-D-ribosylamine + glycine + ATP = N(1)-(5-phospho-beta-D-ribosyl)glycinamide + ADP + phosphate + H(+)</text>
        <dbReference type="Rhea" id="RHEA:17453"/>
        <dbReference type="ChEBI" id="CHEBI:15378"/>
        <dbReference type="ChEBI" id="CHEBI:30616"/>
        <dbReference type="ChEBI" id="CHEBI:43474"/>
        <dbReference type="ChEBI" id="CHEBI:57305"/>
        <dbReference type="ChEBI" id="CHEBI:58681"/>
        <dbReference type="ChEBI" id="CHEBI:143788"/>
        <dbReference type="ChEBI" id="CHEBI:456216"/>
        <dbReference type="EC" id="6.3.4.13"/>
    </reaction>
</comment>
<comment type="cofactor">
    <cofactor evidence="1">
        <name>Mg(2+)</name>
        <dbReference type="ChEBI" id="CHEBI:18420"/>
    </cofactor>
    <cofactor evidence="1">
        <name>Mn(2+)</name>
        <dbReference type="ChEBI" id="CHEBI:29035"/>
    </cofactor>
    <text evidence="1">Binds 1 Mg(2+) or Mn(2+) ion per subunit.</text>
</comment>
<comment type="pathway">
    <text evidence="2">Purine metabolism; IMP biosynthesis via de novo pathway; N(1)-(5-phospho-D-ribosyl)glycinamide from 5-phospho-alpha-D-ribose 1-diphosphate: step 2/2.</text>
</comment>
<comment type="similarity">
    <text evidence="2">Belongs to the GARS family.</text>
</comment>
<feature type="chain" id="PRO_0000151445" description="Phosphoribosylamine--glycine ligase">
    <location>
        <begin position="1"/>
        <end position="426"/>
    </location>
</feature>
<feature type="domain" description="ATP-grasp" evidence="2">
    <location>
        <begin position="109"/>
        <end position="312"/>
    </location>
</feature>
<feature type="binding site" evidence="2">
    <location>
        <begin position="138"/>
        <end position="193"/>
    </location>
    <ligand>
        <name>ATP</name>
        <dbReference type="ChEBI" id="CHEBI:30616"/>
    </ligand>
</feature>
<feature type="binding site" evidence="2">
    <location>
        <position position="282"/>
    </location>
    <ligand>
        <name>Mg(2+)</name>
        <dbReference type="ChEBI" id="CHEBI:18420"/>
    </ligand>
</feature>
<feature type="binding site" evidence="2">
    <location>
        <position position="284"/>
    </location>
    <ligand>
        <name>Mg(2+)</name>
        <dbReference type="ChEBI" id="CHEBI:18420"/>
    </ligand>
</feature>
<gene>
    <name evidence="2" type="primary">purD</name>
</gene>
<reference key="1">
    <citation type="submission" date="1997-04" db="EMBL/GenBank/DDBJ databases">
        <title>Sequence analysis of Corynebacterium ammoniagenes purD/B/C region.</title>
        <authorList>
            <person name="Yonetani Y."/>
            <person name="Teshiba S."/>
        </authorList>
    </citation>
    <scope>NUCLEOTIDE SEQUENCE [GENOMIC DNA]</scope>
    <source>
        <strain>ATCC 6872 / DSM 20305 / IAM 1645 / KCTC 1019 / NCTC 2399</strain>
    </source>
</reference>
<protein>
    <recommendedName>
        <fullName evidence="2">Phosphoribosylamine--glycine ligase</fullName>
        <ecNumber evidence="2">6.3.4.13</ecNumber>
    </recommendedName>
    <alternativeName>
        <fullName evidence="2">GARS</fullName>
    </alternativeName>
    <alternativeName>
        <fullName evidence="2">Glycinamide ribonucleotide synthetase</fullName>
    </alternativeName>
    <alternativeName>
        <fullName evidence="2">Phosphoribosylglycinamide synthetase</fullName>
    </alternativeName>
</protein>
<dbReference type="EC" id="6.3.4.13" evidence="2"/>
<dbReference type="EMBL" id="AB003161">
    <property type="protein sequence ID" value="BAA89446.1"/>
    <property type="molecule type" value="Genomic_DNA"/>
</dbReference>
<dbReference type="SMR" id="Q9RHX4"/>
<dbReference type="UniPathway" id="UPA00074">
    <property type="reaction ID" value="UER00125"/>
</dbReference>
<dbReference type="GO" id="GO:0005524">
    <property type="term" value="F:ATP binding"/>
    <property type="evidence" value="ECO:0007669"/>
    <property type="project" value="UniProtKB-KW"/>
</dbReference>
<dbReference type="GO" id="GO:0046872">
    <property type="term" value="F:metal ion binding"/>
    <property type="evidence" value="ECO:0007669"/>
    <property type="project" value="UniProtKB-KW"/>
</dbReference>
<dbReference type="GO" id="GO:0004637">
    <property type="term" value="F:phosphoribosylamine-glycine ligase activity"/>
    <property type="evidence" value="ECO:0007669"/>
    <property type="project" value="UniProtKB-UniRule"/>
</dbReference>
<dbReference type="GO" id="GO:0006189">
    <property type="term" value="P:'de novo' IMP biosynthetic process"/>
    <property type="evidence" value="ECO:0007669"/>
    <property type="project" value="UniProtKB-UniRule"/>
</dbReference>
<dbReference type="GO" id="GO:0009113">
    <property type="term" value="P:purine nucleobase biosynthetic process"/>
    <property type="evidence" value="ECO:0007669"/>
    <property type="project" value="InterPro"/>
</dbReference>
<dbReference type="Gene3D" id="3.40.50.20">
    <property type="match status" value="1"/>
</dbReference>
<dbReference type="Gene3D" id="3.30.1490.20">
    <property type="entry name" value="ATP-grasp fold, A domain"/>
    <property type="match status" value="1"/>
</dbReference>
<dbReference type="Gene3D" id="3.30.470.20">
    <property type="entry name" value="ATP-grasp fold, B domain"/>
    <property type="match status" value="1"/>
</dbReference>
<dbReference type="Gene3D" id="3.90.600.10">
    <property type="entry name" value="Phosphoribosylglycinamide synthetase, C-terminal domain"/>
    <property type="match status" value="1"/>
</dbReference>
<dbReference type="HAMAP" id="MF_00138">
    <property type="entry name" value="GARS"/>
    <property type="match status" value="1"/>
</dbReference>
<dbReference type="InterPro" id="IPR011761">
    <property type="entry name" value="ATP-grasp"/>
</dbReference>
<dbReference type="InterPro" id="IPR013815">
    <property type="entry name" value="ATP_grasp_subdomain_1"/>
</dbReference>
<dbReference type="InterPro" id="IPR016185">
    <property type="entry name" value="PreATP-grasp_dom_sf"/>
</dbReference>
<dbReference type="InterPro" id="IPR020561">
    <property type="entry name" value="PRibGlycinamid_synth_ATP-grasp"/>
</dbReference>
<dbReference type="InterPro" id="IPR000115">
    <property type="entry name" value="PRibGlycinamide_synth"/>
</dbReference>
<dbReference type="InterPro" id="IPR020560">
    <property type="entry name" value="PRibGlycinamide_synth_C-dom"/>
</dbReference>
<dbReference type="InterPro" id="IPR037123">
    <property type="entry name" value="PRibGlycinamide_synth_C_sf"/>
</dbReference>
<dbReference type="InterPro" id="IPR020559">
    <property type="entry name" value="PRibGlycinamide_synth_CS"/>
</dbReference>
<dbReference type="InterPro" id="IPR020562">
    <property type="entry name" value="PRibGlycinamide_synth_N"/>
</dbReference>
<dbReference type="InterPro" id="IPR011054">
    <property type="entry name" value="Rudment_hybrid_motif"/>
</dbReference>
<dbReference type="NCBIfam" id="TIGR00877">
    <property type="entry name" value="purD"/>
    <property type="match status" value="1"/>
</dbReference>
<dbReference type="PANTHER" id="PTHR43472">
    <property type="entry name" value="PHOSPHORIBOSYLAMINE--GLYCINE LIGASE"/>
    <property type="match status" value="1"/>
</dbReference>
<dbReference type="PANTHER" id="PTHR43472:SF1">
    <property type="entry name" value="PHOSPHORIBOSYLAMINE--GLYCINE LIGASE, CHLOROPLASTIC"/>
    <property type="match status" value="1"/>
</dbReference>
<dbReference type="Pfam" id="PF01071">
    <property type="entry name" value="GARS_A"/>
    <property type="match status" value="1"/>
</dbReference>
<dbReference type="Pfam" id="PF02843">
    <property type="entry name" value="GARS_C"/>
    <property type="match status" value="1"/>
</dbReference>
<dbReference type="Pfam" id="PF02844">
    <property type="entry name" value="GARS_N"/>
    <property type="match status" value="1"/>
</dbReference>
<dbReference type="SMART" id="SM01209">
    <property type="entry name" value="GARS_A"/>
    <property type="match status" value="1"/>
</dbReference>
<dbReference type="SMART" id="SM01210">
    <property type="entry name" value="GARS_C"/>
    <property type="match status" value="1"/>
</dbReference>
<dbReference type="SUPFAM" id="SSF56059">
    <property type="entry name" value="Glutathione synthetase ATP-binding domain-like"/>
    <property type="match status" value="1"/>
</dbReference>
<dbReference type="SUPFAM" id="SSF52440">
    <property type="entry name" value="PreATP-grasp domain"/>
    <property type="match status" value="1"/>
</dbReference>
<dbReference type="SUPFAM" id="SSF51246">
    <property type="entry name" value="Rudiment single hybrid motif"/>
    <property type="match status" value="1"/>
</dbReference>
<dbReference type="PROSITE" id="PS50975">
    <property type="entry name" value="ATP_GRASP"/>
    <property type="match status" value="1"/>
</dbReference>
<dbReference type="PROSITE" id="PS00184">
    <property type="entry name" value="GARS"/>
    <property type="match status" value="1"/>
</dbReference>
<name>PUR2_CORAM</name>
<evidence type="ECO:0000250" key="1"/>
<evidence type="ECO:0000255" key="2">
    <source>
        <dbReference type="HAMAP-Rule" id="MF_00138"/>
    </source>
</evidence>
<organism>
    <name type="scientific">Corynebacterium ammoniagenes</name>
    <name type="common">Brevibacterium ammoniagenes</name>
    <dbReference type="NCBI Taxonomy" id="1697"/>
    <lineage>
        <taxon>Bacteria</taxon>
        <taxon>Bacillati</taxon>
        <taxon>Actinomycetota</taxon>
        <taxon>Actinomycetes</taxon>
        <taxon>Mycobacteriales</taxon>
        <taxon>Corynebacteriaceae</taxon>
        <taxon>Corynebacterium</taxon>
    </lineage>
</organism>
<proteinExistence type="inferred from homology"/>
<sequence>MRILVIGSGGREHAILKGLAADPATTDLHVAPGSPAFASLATVHADYKEVADPARMLELAQDIKPELVVIGPEIPLVAGVADTLRAEGIAVFGPNADAAQIEGSKAFAKEVMEAAGVATARAQTLPPGMTDDDIEHELDYFGPMYVVKDDGLAAGKGVVVTADRAEARQHIHLVHAAGNPVLLESFLDGPEVSLFCLVDGETVVPLLPAQDHKRAYDNDEGPNTGGMGAYTPLPWLSAEGVDRIVREVCEPVAKQMVERGTPYSGLLYAGLAWGQEGPSVIEFNCRFGDPETQPLLSLLKTPLAGVLNAVATGTLDELPALEWEDAYAVTVVLAAANYPESPRKGDAITSPDLADTDKILHAGTAVKDAEVISNGGRVLNVIGKGETLSAARAAAYEVLENIELADSFYRTDIGQAAEEGRISIDS</sequence>
<accession>Q9RHX4</accession>
<keyword id="KW-0067">ATP-binding</keyword>
<keyword id="KW-0436">Ligase</keyword>
<keyword id="KW-0460">Magnesium</keyword>
<keyword id="KW-0464">Manganese</keyword>
<keyword id="KW-0479">Metal-binding</keyword>
<keyword id="KW-0547">Nucleotide-binding</keyword>
<keyword id="KW-0658">Purine biosynthesis</keyword>